<feature type="chain" id="PRO_0000332195" description="Tektin bundle-interacting protein 1">
    <location>
        <begin position="1"/>
        <end position="209"/>
    </location>
</feature>
<feature type="sequence variant" id="VAR_061253" description="In dbSNP:rs12608919.">
    <original>P</original>
    <variation>L</variation>
    <location>
        <position position="83"/>
    </location>
</feature>
<feature type="sequence variant" id="VAR_061254" description="In dbSNP:rs6510758.">
    <original>A</original>
    <variation>V</variation>
    <location>
        <position position="137"/>
    </location>
</feature>
<dbReference type="EMBL" id="AC005786">
    <property type="status" value="NOT_ANNOTATED_CDS"/>
    <property type="molecule type" value="Genomic_DNA"/>
</dbReference>
<dbReference type="CCDS" id="CCDS45918.1"/>
<dbReference type="RefSeq" id="NP_001129052.1">
    <property type="nucleotide sequence ID" value="NM_001135580.2"/>
</dbReference>
<dbReference type="BioGRID" id="933564">
    <property type="interactions" value="2"/>
</dbReference>
<dbReference type="FunCoup" id="A6NCJ1">
    <property type="interactions" value="21"/>
</dbReference>
<dbReference type="STRING" id="9606.ENSP00000327950"/>
<dbReference type="iPTMnet" id="A6NCJ1"/>
<dbReference type="PhosphoSitePlus" id="A6NCJ1"/>
<dbReference type="BioMuta" id="C19orf71"/>
<dbReference type="MassIVE" id="A6NCJ1"/>
<dbReference type="PaxDb" id="9606-ENSP00000327950"/>
<dbReference type="PeptideAtlas" id="A6NCJ1"/>
<dbReference type="ProteomicsDB" id="839"/>
<dbReference type="Antibodypedia" id="63437">
    <property type="antibodies" value="5 antibodies from 5 providers"/>
</dbReference>
<dbReference type="DNASU" id="100128569"/>
<dbReference type="Ensembl" id="ENST00000329493.6">
    <property type="protein sequence ID" value="ENSP00000327950.4"/>
    <property type="gene ID" value="ENSG00000183397.6"/>
</dbReference>
<dbReference type="GeneID" id="100128569"/>
<dbReference type="KEGG" id="hsa:100128569"/>
<dbReference type="MANE-Select" id="ENST00000329493.6">
    <property type="protein sequence ID" value="ENSP00000327950.4"/>
    <property type="RefSeq nucleotide sequence ID" value="NM_001135580.2"/>
    <property type="RefSeq protein sequence ID" value="NP_001129052.1"/>
</dbReference>
<dbReference type="UCSC" id="uc010xhm.3">
    <property type="organism name" value="human"/>
</dbReference>
<dbReference type="AGR" id="HGNC:34496"/>
<dbReference type="CTD" id="100128569"/>
<dbReference type="DisGeNET" id="100128569"/>
<dbReference type="GeneCards" id="TEKTIP1"/>
<dbReference type="HGNC" id="HGNC:34496">
    <property type="gene designation" value="TEKTIP1"/>
</dbReference>
<dbReference type="HPA" id="ENSG00000183397">
    <property type="expression patterns" value="Tissue enhanced (testis)"/>
</dbReference>
<dbReference type="neXtProt" id="NX_A6NCJ1"/>
<dbReference type="OpenTargets" id="ENSG00000183397"/>
<dbReference type="VEuPathDB" id="HostDB:ENSG00000183397"/>
<dbReference type="eggNOG" id="ENOG502S0K8">
    <property type="taxonomic scope" value="Eukaryota"/>
</dbReference>
<dbReference type="GeneTree" id="ENSGT00390000004282"/>
<dbReference type="HOGENOM" id="CLU_108079_0_0_1"/>
<dbReference type="InParanoid" id="A6NCJ1"/>
<dbReference type="OMA" id="EAWYNLP"/>
<dbReference type="PAN-GO" id="A6NCJ1">
    <property type="GO annotations" value="0 GO annotations based on evolutionary models"/>
</dbReference>
<dbReference type="PhylomeDB" id="A6NCJ1"/>
<dbReference type="TreeFam" id="TF336002"/>
<dbReference type="PathwayCommons" id="A6NCJ1"/>
<dbReference type="SignaLink" id="A6NCJ1"/>
<dbReference type="BioGRID-ORCS" id="100128569">
    <property type="hits" value="12 hits in 1123 CRISPR screens"/>
</dbReference>
<dbReference type="GenomeRNAi" id="100128569"/>
<dbReference type="Pharos" id="A6NCJ1">
    <property type="development level" value="Tdark"/>
</dbReference>
<dbReference type="PRO" id="PR:A6NCJ1"/>
<dbReference type="Proteomes" id="UP000005640">
    <property type="component" value="Chromosome 19"/>
</dbReference>
<dbReference type="RNAct" id="A6NCJ1">
    <property type="molecule type" value="protein"/>
</dbReference>
<dbReference type="Bgee" id="ENSG00000183397">
    <property type="expression patterns" value="Expressed in right testis and 95 other cell types or tissues"/>
</dbReference>
<dbReference type="GO" id="GO:0160111">
    <property type="term" value="C:axonemal A tubule inner sheath"/>
    <property type="evidence" value="ECO:0000250"/>
    <property type="project" value="UniProtKB"/>
</dbReference>
<dbReference type="GO" id="GO:0005879">
    <property type="term" value="C:axonemal microtubule"/>
    <property type="evidence" value="ECO:0000250"/>
    <property type="project" value="UniProtKB"/>
</dbReference>
<dbReference type="GO" id="GO:0036126">
    <property type="term" value="C:sperm flagellum"/>
    <property type="evidence" value="ECO:0000250"/>
    <property type="project" value="UniProtKB"/>
</dbReference>
<dbReference type="GO" id="GO:0030317">
    <property type="term" value="P:flagellated sperm motility"/>
    <property type="evidence" value="ECO:0000250"/>
    <property type="project" value="UniProtKB"/>
</dbReference>
<dbReference type="InterPro" id="IPR029203">
    <property type="entry name" value="TKTI1"/>
</dbReference>
<dbReference type="PANTHER" id="PTHR31254">
    <property type="entry name" value="HYPOTHETICAL PROTEIN LOC690617"/>
    <property type="match status" value="1"/>
</dbReference>
<dbReference type="PANTHER" id="PTHR31254:SF1">
    <property type="entry name" value="TEKTIN BUNDLE-INTERACTING PROTEIN 1"/>
    <property type="match status" value="1"/>
</dbReference>
<dbReference type="Pfam" id="PF15041">
    <property type="entry name" value="TKTI1"/>
    <property type="match status" value="1"/>
</dbReference>
<reference key="1">
    <citation type="journal article" date="2004" name="Nature">
        <title>The DNA sequence and biology of human chromosome 19.</title>
        <authorList>
            <person name="Grimwood J."/>
            <person name="Gordon L.A."/>
            <person name="Olsen A.S."/>
            <person name="Terry A."/>
            <person name="Schmutz J."/>
            <person name="Lamerdin J.E."/>
            <person name="Hellsten U."/>
            <person name="Goodstein D."/>
            <person name="Couronne O."/>
            <person name="Tran-Gyamfi M."/>
            <person name="Aerts A."/>
            <person name="Altherr M."/>
            <person name="Ashworth L."/>
            <person name="Bajorek E."/>
            <person name="Black S."/>
            <person name="Branscomb E."/>
            <person name="Caenepeel S."/>
            <person name="Carrano A.V."/>
            <person name="Caoile C."/>
            <person name="Chan Y.M."/>
            <person name="Christensen M."/>
            <person name="Cleland C.A."/>
            <person name="Copeland A."/>
            <person name="Dalin E."/>
            <person name="Dehal P."/>
            <person name="Denys M."/>
            <person name="Detter J.C."/>
            <person name="Escobar J."/>
            <person name="Flowers D."/>
            <person name="Fotopulos D."/>
            <person name="Garcia C."/>
            <person name="Georgescu A.M."/>
            <person name="Glavina T."/>
            <person name="Gomez M."/>
            <person name="Gonzales E."/>
            <person name="Groza M."/>
            <person name="Hammon N."/>
            <person name="Hawkins T."/>
            <person name="Haydu L."/>
            <person name="Ho I."/>
            <person name="Huang W."/>
            <person name="Israni S."/>
            <person name="Jett J."/>
            <person name="Kadner K."/>
            <person name="Kimball H."/>
            <person name="Kobayashi A."/>
            <person name="Larionov V."/>
            <person name="Leem S.-H."/>
            <person name="Lopez F."/>
            <person name="Lou Y."/>
            <person name="Lowry S."/>
            <person name="Malfatti S."/>
            <person name="Martinez D."/>
            <person name="McCready P.M."/>
            <person name="Medina C."/>
            <person name="Morgan J."/>
            <person name="Nelson K."/>
            <person name="Nolan M."/>
            <person name="Ovcharenko I."/>
            <person name="Pitluck S."/>
            <person name="Pollard M."/>
            <person name="Popkie A.P."/>
            <person name="Predki P."/>
            <person name="Quan G."/>
            <person name="Ramirez L."/>
            <person name="Rash S."/>
            <person name="Retterer J."/>
            <person name="Rodriguez A."/>
            <person name="Rogers S."/>
            <person name="Salamov A."/>
            <person name="Salazar A."/>
            <person name="She X."/>
            <person name="Smith D."/>
            <person name="Slezak T."/>
            <person name="Solovyev V."/>
            <person name="Thayer N."/>
            <person name="Tice H."/>
            <person name="Tsai M."/>
            <person name="Ustaszewska A."/>
            <person name="Vo N."/>
            <person name="Wagner M."/>
            <person name="Wheeler J."/>
            <person name="Wu K."/>
            <person name="Xie G."/>
            <person name="Yang J."/>
            <person name="Dubchak I."/>
            <person name="Furey T.S."/>
            <person name="DeJong P."/>
            <person name="Dickson M."/>
            <person name="Gordon D."/>
            <person name="Eichler E.E."/>
            <person name="Pennacchio L.A."/>
            <person name="Richardson P."/>
            <person name="Stubbs L."/>
            <person name="Rokhsar D.S."/>
            <person name="Myers R.M."/>
            <person name="Rubin E.M."/>
            <person name="Lucas S.M."/>
        </authorList>
    </citation>
    <scope>NUCLEOTIDE SEQUENCE [LARGE SCALE GENOMIC DNA]</scope>
</reference>
<sequence>MQTLRQEAARPCIPSGTLEASFPAPLYSDDYLSLEGSRWPPAIRQATRWKYTPMGRDAAGQLWYTGLTNSDAWEAWYNLPRAPASPFREAYNRWHSCYQHRECSMPSAYTQHLRETAWHDPIVPAQYQAPSTRWGSALWKDRPIRGKEYVLNRNRYGVEPLWRASDYVPSLSAPQRPPGTTQNYREWVLEPYCPSTCQRSPPSLTPTPR</sequence>
<proteinExistence type="evidence at protein level"/>
<name>TKTI1_HUMAN</name>
<accession>A6NCJ1</accession>
<comment type="function">
    <text evidence="2">Microtubule inner protein (MIP) part of the dynein-decorated doublet microtubules (DMTs) in cilia axoneme, which is required for motile cilia beating. Located at the center of the tektin bundle where may function to recruit tektins or stabilize the bundle.</text>
</comment>
<comment type="subunit">
    <text evidence="1">Microtubule inner protein component of sperm flagellar doublet microtubules.</text>
</comment>
<comment type="subcellular location">
    <subcellularLocation>
        <location evidence="2">Cytoplasm</location>
        <location evidence="2">Cytoskeleton</location>
        <location evidence="2">Cilium axoneme</location>
    </subcellularLocation>
    <subcellularLocation>
        <location evidence="1">Cytoplasm</location>
        <location evidence="1">Cytoskeleton</location>
        <location evidence="1">Flagellum axoneme</location>
    </subcellularLocation>
</comment>
<evidence type="ECO:0000250" key="1">
    <source>
        <dbReference type="UniProtKB" id="A6H6Q4"/>
    </source>
</evidence>
<evidence type="ECO:0000250" key="2">
    <source>
        <dbReference type="UniProtKB" id="Q2M2T2"/>
    </source>
</evidence>
<evidence type="ECO:0000312" key="3">
    <source>
        <dbReference type="HGNC" id="HGNC:34496"/>
    </source>
</evidence>
<keyword id="KW-0966">Cell projection</keyword>
<keyword id="KW-0969">Cilium</keyword>
<keyword id="KW-0963">Cytoplasm</keyword>
<keyword id="KW-0206">Cytoskeleton</keyword>
<keyword id="KW-0282">Flagellum</keyword>
<keyword id="KW-1267">Proteomics identification</keyword>
<keyword id="KW-1185">Reference proteome</keyword>
<gene>
    <name evidence="3" type="primary">TEKTIP1</name>
    <name type="synonym">C19orf71</name>
</gene>
<protein>
    <recommendedName>
        <fullName evidence="3">Tektin bundle-interacting protein 1</fullName>
    </recommendedName>
</protein>
<organism>
    <name type="scientific">Homo sapiens</name>
    <name type="common">Human</name>
    <dbReference type="NCBI Taxonomy" id="9606"/>
    <lineage>
        <taxon>Eukaryota</taxon>
        <taxon>Metazoa</taxon>
        <taxon>Chordata</taxon>
        <taxon>Craniata</taxon>
        <taxon>Vertebrata</taxon>
        <taxon>Euteleostomi</taxon>
        <taxon>Mammalia</taxon>
        <taxon>Eutheria</taxon>
        <taxon>Euarchontoglires</taxon>
        <taxon>Primates</taxon>
        <taxon>Haplorrhini</taxon>
        <taxon>Catarrhini</taxon>
        <taxon>Hominidae</taxon>
        <taxon>Homo</taxon>
    </lineage>
</organism>